<protein>
    <recommendedName>
        <fullName evidence="1">Ribonuclease PH</fullName>
        <shortName evidence="1">RNase PH</shortName>
        <ecNumber evidence="1">2.7.7.56</ecNumber>
    </recommendedName>
    <alternativeName>
        <fullName evidence="1">tRNA nucleotidyltransferase</fullName>
    </alternativeName>
</protein>
<evidence type="ECO:0000255" key="1">
    <source>
        <dbReference type="HAMAP-Rule" id="MF_00564"/>
    </source>
</evidence>
<gene>
    <name evidence="1" type="primary">rph</name>
    <name type="ordered locus">LPC_1496</name>
</gene>
<dbReference type="EC" id="2.7.7.56" evidence="1"/>
<dbReference type="EMBL" id="CP000675">
    <property type="protein sequence ID" value="ABQ55445.1"/>
    <property type="molecule type" value="Genomic_DNA"/>
</dbReference>
<dbReference type="RefSeq" id="WP_011946916.1">
    <property type="nucleotide sequence ID" value="NC_009494.2"/>
</dbReference>
<dbReference type="SMR" id="A5IDJ5"/>
<dbReference type="KEGG" id="lpc:LPC_1496"/>
<dbReference type="HOGENOM" id="CLU_050858_0_0_6"/>
<dbReference type="GO" id="GO:0000175">
    <property type="term" value="F:3'-5'-RNA exonuclease activity"/>
    <property type="evidence" value="ECO:0007669"/>
    <property type="project" value="UniProtKB-UniRule"/>
</dbReference>
<dbReference type="GO" id="GO:0000049">
    <property type="term" value="F:tRNA binding"/>
    <property type="evidence" value="ECO:0007669"/>
    <property type="project" value="UniProtKB-UniRule"/>
</dbReference>
<dbReference type="GO" id="GO:0009022">
    <property type="term" value="F:tRNA nucleotidyltransferase activity"/>
    <property type="evidence" value="ECO:0007669"/>
    <property type="project" value="UniProtKB-UniRule"/>
</dbReference>
<dbReference type="GO" id="GO:0016075">
    <property type="term" value="P:rRNA catabolic process"/>
    <property type="evidence" value="ECO:0007669"/>
    <property type="project" value="UniProtKB-UniRule"/>
</dbReference>
<dbReference type="GO" id="GO:0006364">
    <property type="term" value="P:rRNA processing"/>
    <property type="evidence" value="ECO:0007669"/>
    <property type="project" value="UniProtKB-KW"/>
</dbReference>
<dbReference type="GO" id="GO:0008033">
    <property type="term" value="P:tRNA processing"/>
    <property type="evidence" value="ECO:0007669"/>
    <property type="project" value="UniProtKB-UniRule"/>
</dbReference>
<dbReference type="CDD" id="cd11362">
    <property type="entry name" value="RNase_PH_bact"/>
    <property type="match status" value="1"/>
</dbReference>
<dbReference type="FunFam" id="3.30.230.70:FF:000003">
    <property type="entry name" value="Ribonuclease PH"/>
    <property type="match status" value="1"/>
</dbReference>
<dbReference type="Gene3D" id="3.30.230.70">
    <property type="entry name" value="GHMP Kinase, N-terminal domain"/>
    <property type="match status" value="1"/>
</dbReference>
<dbReference type="HAMAP" id="MF_00564">
    <property type="entry name" value="RNase_PH"/>
    <property type="match status" value="1"/>
</dbReference>
<dbReference type="InterPro" id="IPR001247">
    <property type="entry name" value="ExoRNase_PH_dom1"/>
</dbReference>
<dbReference type="InterPro" id="IPR015847">
    <property type="entry name" value="ExoRNase_PH_dom2"/>
</dbReference>
<dbReference type="InterPro" id="IPR036345">
    <property type="entry name" value="ExoRNase_PH_dom2_sf"/>
</dbReference>
<dbReference type="InterPro" id="IPR027408">
    <property type="entry name" value="PNPase/RNase_PH_dom_sf"/>
</dbReference>
<dbReference type="InterPro" id="IPR020568">
    <property type="entry name" value="Ribosomal_Su5_D2-typ_SF"/>
</dbReference>
<dbReference type="InterPro" id="IPR050080">
    <property type="entry name" value="RNase_PH"/>
</dbReference>
<dbReference type="InterPro" id="IPR002381">
    <property type="entry name" value="RNase_PH_bac-type"/>
</dbReference>
<dbReference type="InterPro" id="IPR018336">
    <property type="entry name" value="RNase_PH_CS"/>
</dbReference>
<dbReference type="NCBIfam" id="TIGR01966">
    <property type="entry name" value="RNasePH"/>
    <property type="match status" value="1"/>
</dbReference>
<dbReference type="PANTHER" id="PTHR11953">
    <property type="entry name" value="EXOSOME COMPLEX COMPONENT"/>
    <property type="match status" value="1"/>
</dbReference>
<dbReference type="PANTHER" id="PTHR11953:SF0">
    <property type="entry name" value="EXOSOME COMPLEX COMPONENT RRP41"/>
    <property type="match status" value="1"/>
</dbReference>
<dbReference type="Pfam" id="PF01138">
    <property type="entry name" value="RNase_PH"/>
    <property type="match status" value="1"/>
</dbReference>
<dbReference type="Pfam" id="PF03725">
    <property type="entry name" value="RNase_PH_C"/>
    <property type="match status" value="1"/>
</dbReference>
<dbReference type="SUPFAM" id="SSF55666">
    <property type="entry name" value="Ribonuclease PH domain 2-like"/>
    <property type="match status" value="1"/>
</dbReference>
<dbReference type="SUPFAM" id="SSF54211">
    <property type="entry name" value="Ribosomal protein S5 domain 2-like"/>
    <property type="match status" value="1"/>
</dbReference>
<dbReference type="PROSITE" id="PS01277">
    <property type="entry name" value="RIBONUCLEASE_PH"/>
    <property type="match status" value="1"/>
</dbReference>
<reference key="1">
    <citation type="submission" date="2006-11" db="EMBL/GenBank/DDBJ databases">
        <title>Identification and characterization of a new conjugation/ type IVA secretion system (trb/tra) of L. pneumophila Corby localized on a mobile genomic island.</title>
        <authorList>
            <person name="Gloeckner G."/>
            <person name="Albert-Weissenberger C."/>
            <person name="Weinmann E."/>
            <person name="Jacobi S."/>
            <person name="Schunder E."/>
            <person name="Steinert M."/>
            <person name="Buchrieser C."/>
            <person name="Hacker J."/>
            <person name="Heuner K."/>
        </authorList>
    </citation>
    <scope>NUCLEOTIDE SEQUENCE [LARGE SCALE GENOMIC DNA]</scope>
    <source>
        <strain>Corby</strain>
    </source>
</reference>
<feature type="chain" id="PRO_1000024821" description="Ribonuclease PH">
    <location>
        <begin position="1"/>
        <end position="235"/>
    </location>
</feature>
<feature type="binding site" evidence="1">
    <location>
        <position position="86"/>
    </location>
    <ligand>
        <name>phosphate</name>
        <dbReference type="ChEBI" id="CHEBI:43474"/>
        <note>substrate</note>
    </ligand>
</feature>
<feature type="binding site" evidence="1">
    <location>
        <begin position="124"/>
        <end position="126"/>
    </location>
    <ligand>
        <name>phosphate</name>
        <dbReference type="ChEBI" id="CHEBI:43474"/>
        <note>substrate</note>
    </ligand>
</feature>
<name>RNPH_LEGPC</name>
<keyword id="KW-0548">Nucleotidyltransferase</keyword>
<keyword id="KW-0694">RNA-binding</keyword>
<keyword id="KW-0698">rRNA processing</keyword>
<keyword id="KW-0808">Transferase</keyword>
<keyword id="KW-0819">tRNA processing</keyword>
<keyword id="KW-0820">tRNA-binding</keyword>
<comment type="function">
    <text evidence="1">Phosphorolytic 3'-5' exoribonuclease that plays an important role in tRNA 3'-end maturation. Removes nucleotide residues following the 3'-CCA terminus of tRNAs; can also add nucleotides to the ends of RNA molecules by using nucleoside diphosphates as substrates, but this may not be physiologically important. Probably plays a role in initiation of 16S rRNA degradation (leading to ribosome degradation) during starvation.</text>
</comment>
<comment type="catalytic activity">
    <reaction evidence="1">
        <text>tRNA(n+1) + phosphate = tRNA(n) + a ribonucleoside 5'-diphosphate</text>
        <dbReference type="Rhea" id="RHEA:10628"/>
        <dbReference type="Rhea" id="RHEA-COMP:17343"/>
        <dbReference type="Rhea" id="RHEA-COMP:17344"/>
        <dbReference type="ChEBI" id="CHEBI:43474"/>
        <dbReference type="ChEBI" id="CHEBI:57930"/>
        <dbReference type="ChEBI" id="CHEBI:173114"/>
        <dbReference type="EC" id="2.7.7.56"/>
    </reaction>
</comment>
<comment type="subunit">
    <text evidence="1">Homohexameric ring arranged as a trimer of dimers.</text>
</comment>
<comment type="similarity">
    <text evidence="1">Belongs to the RNase PH family.</text>
</comment>
<sequence>MRPSNREHDQLRPVTITRNFTNYAEGSVLVEFGQTKVICNASIVEGVPRFLKGKNQGWITAEYGMLPRATHSRTEREASKGKQGGRTLEIQRLIGRSLRACIDLKVLGENTITLDCDVIQADGGTRTAAITGSCVAMRDAIHWMVQREKIKKMPVFNYVAAVSVGIYRGQPVLDLDYAEDVLAETDMNVVMNEQGHFIEVQGTAEDNSFNREQLNSMLSLAEIGIPQLIEIQKNA</sequence>
<organism>
    <name type="scientific">Legionella pneumophila (strain Corby)</name>
    <dbReference type="NCBI Taxonomy" id="400673"/>
    <lineage>
        <taxon>Bacteria</taxon>
        <taxon>Pseudomonadati</taxon>
        <taxon>Pseudomonadota</taxon>
        <taxon>Gammaproteobacteria</taxon>
        <taxon>Legionellales</taxon>
        <taxon>Legionellaceae</taxon>
        <taxon>Legionella</taxon>
    </lineage>
</organism>
<accession>A5IDJ5</accession>
<proteinExistence type="inferred from homology"/>